<organism>
    <name type="scientific">Arabidopsis thaliana</name>
    <name type="common">Mouse-ear cress</name>
    <dbReference type="NCBI Taxonomy" id="3702"/>
    <lineage>
        <taxon>Eukaryota</taxon>
        <taxon>Viridiplantae</taxon>
        <taxon>Streptophyta</taxon>
        <taxon>Embryophyta</taxon>
        <taxon>Tracheophyta</taxon>
        <taxon>Spermatophyta</taxon>
        <taxon>Magnoliopsida</taxon>
        <taxon>eudicotyledons</taxon>
        <taxon>Gunneridae</taxon>
        <taxon>Pentapetalae</taxon>
        <taxon>rosids</taxon>
        <taxon>malvids</taxon>
        <taxon>Brassicales</taxon>
        <taxon>Brassicaceae</taxon>
        <taxon>Camelineae</taxon>
        <taxon>Arabidopsis</taxon>
    </lineage>
</organism>
<accession>Q9FMA6</accession>
<accession>F4KCZ5</accession>
<reference key="1">
    <citation type="journal article" date="1998" name="DNA Res.">
        <title>Structural analysis of Arabidopsis thaliana chromosome 5. IV. Sequence features of the regions of 1,456,315 bp covered by nineteen physically assigned P1 and TAC clones.</title>
        <authorList>
            <person name="Sato S."/>
            <person name="Kaneko T."/>
            <person name="Kotani H."/>
            <person name="Nakamura Y."/>
            <person name="Asamizu E."/>
            <person name="Miyajima N."/>
            <person name="Tabata S."/>
        </authorList>
    </citation>
    <scope>NUCLEOTIDE SEQUENCE [LARGE SCALE GENOMIC DNA]</scope>
    <source>
        <strain>cv. Columbia</strain>
    </source>
</reference>
<reference key="2">
    <citation type="journal article" date="2017" name="Plant J.">
        <title>Araport11: a complete reannotation of the Arabidopsis thaliana reference genome.</title>
        <authorList>
            <person name="Cheng C.Y."/>
            <person name="Krishnakumar V."/>
            <person name="Chan A.P."/>
            <person name="Thibaud-Nissen F."/>
            <person name="Schobel S."/>
            <person name="Town C.D."/>
        </authorList>
    </citation>
    <scope>GENOME REANNOTATION</scope>
    <source>
        <strain>cv. Columbia</strain>
    </source>
</reference>
<evidence type="ECO:0000250" key="1"/>
<evidence type="ECO:0000255" key="2"/>
<evidence type="ECO:0000305" key="3"/>
<sequence length="223" mass="24152">MNMKNLYLAILYLLAASTLPFAIASDPSPLQDFCIGVNTPANALFVNGKFCKDPKLVTADDFYFSGLDKARTTESSPVGSNVTTVNVNQIPGLNTLGISLVRIDYGINGQNPPHTHPRATEILLVQEGTLFVGFFSSFPENRLFNKTLNKGDVFVFPEGLIHFQVNIGKQPAVAFASLSSQNPGVIIIGNTLFGSKPPIDPNVLAKAFQLDPKVIIQLQKKFG</sequence>
<comment type="function">
    <text>May play a role in plant defense. Probably has no oxalate oxidase activity even if the active site is conserved.</text>
</comment>
<comment type="subunit">
    <text evidence="1">Oligomer (believed to be a pentamer but probably hexamer).</text>
</comment>
<comment type="subcellular location">
    <subcellularLocation>
        <location evidence="1">Secreted</location>
        <location evidence="1">Extracellular space</location>
        <location evidence="1">Apoplast</location>
    </subcellularLocation>
</comment>
<comment type="similarity">
    <text evidence="3">Belongs to the germin family.</text>
</comment>
<keyword id="KW-0052">Apoplast</keyword>
<keyword id="KW-1015">Disulfide bond</keyword>
<keyword id="KW-0325">Glycoprotein</keyword>
<keyword id="KW-0464">Manganese</keyword>
<keyword id="KW-0479">Metal-binding</keyword>
<keyword id="KW-1185">Reference proteome</keyword>
<keyword id="KW-0964">Secreted</keyword>
<keyword id="KW-0732">Signal</keyword>
<gene>
    <name type="ordered locus">At5g38960</name>
    <name type="ORF">K15E6.20</name>
    <name type="ORF">K15E6_140</name>
</gene>
<proteinExistence type="inferred from homology"/>
<protein>
    <recommendedName>
        <fullName>Putative germin-like protein subfamily 1 member 12</fullName>
    </recommendedName>
</protein>
<dbReference type="EMBL" id="AB009048">
    <property type="protein sequence ID" value="BAB08652.1"/>
    <property type="molecule type" value="Genomic_DNA"/>
</dbReference>
<dbReference type="EMBL" id="CP002688">
    <property type="protein sequence ID" value="AED94379.2"/>
    <property type="molecule type" value="Genomic_DNA"/>
</dbReference>
<dbReference type="RefSeq" id="NP_198712.2">
    <property type="nucleotide sequence ID" value="NM_123258.2"/>
</dbReference>
<dbReference type="SMR" id="Q9FMA6"/>
<dbReference type="FunCoup" id="Q9FMA6">
    <property type="interactions" value="34"/>
</dbReference>
<dbReference type="GlyGen" id="Q9FMA6">
    <property type="glycosylation" value="2 sites"/>
</dbReference>
<dbReference type="PaxDb" id="3702-AT5G38960.1"/>
<dbReference type="ProteomicsDB" id="230454"/>
<dbReference type="EnsemblPlants" id="AT5G38960.1">
    <property type="protein sequence ID" value="AT5G38960.1"/>
    <property type="gene ID" value="AT5G38960"/>
</dbReference>
<dbReference type="GeneID" id="833888"/>
<dbReference type="Gramene" id="AT5G38960.1">
    <property type="protein sequence ID" value="AT5G38960.1"/>
    <property type="gene ID" value="AT5G38960"/>
</dbReference>
<dbReference type="KEGG" id="ath:AT5G38960"/>
<dbReference type="Araport" id="AT5G38960"/>
<dbReference type="TAIR" id="AT5G38960"/>
<dbReference type="eggNOG" id="ENOG502QQ4A">
    <property type="taxonomic scope" value="Eukaryota"/>
</dbReference>
<dbReference type="HOGENOM" id="CLU_015790_0_0_1"/>
<dbReference type="InParanoid" id="Q9FMA6"/>
<dbReference type="OMA" id="FWSDNDS"/>
<dbReference type="PhylomeDB" id="Q9FMA6"/>
<dbReference type="PRO" id="PR:Q9FMA6"/>
<dbReference type="Proteomes" id="UP000006548">
    <property type="component" value="Chromosome 5"/>
</dbReference>
<dbReference type="ExpressionAtlas" id="Q9FMA6">
    <property type="expression patterns" value="baseline and differential"/>
</dbReference>
<dbReference type="GO" id="GO:0048046">
    <property type="term" value="C:apoplast"/>
    <property type="evidence" value="ECO:0007669"/>
    <property type="project" value="UniProtKB-SubCell"/>
</dbReference>
<dbReference type="GO" id="GO:0030145">
    <property type="term" value="F:manganese ion binding"/>
    <property type="evidence" value="ECO:0007669"/>
    <property type="project" value="InterPro"/>
</dbReference>
<dbReference type="CDD" id="cd02241">
    <property type="entry name" value="cupin_OxOx"/>
    <property type="match status" value="1"/>
</dbReference>
<dbReference type="FunFam" id="2.60.120.10:FF:000005">
    <property type="entry name" value="Germin-like protein subfamily 1 member 8"/>
    <property type="match status" value="1"/>
</dbReference>
<dbReference type="Gene3D" id="2.60.120.10">
    <property type="entry name" value="Jelly Rolls"/>
    <property type="match status" value="1"/>
</dbReference>
<dbReference type="InterPro" id="IPR006045">
    <property type="entry name" value="Cupin_1"/>
</dbReference>
<dbReference type="InterPro" id="IPR001929">
    <property type="entry name" value="Germin"/>
</dbReference>
<dbReference type="InterPro" id="IPR019780">
    <property type="entry name" value="Germin_Mn-BS"/>
</dbReference>
<dbReference type="InterPro" id="IPR014710">
    <property type="entry name" value="RmlC-like_jellyroll"/>
</dbReference>
<dbReference type="InterPro" id="IPR011051">
    <property type="entry name" value="RmlC_Cupin_sf"/>
</dbReference>
<dbReference type="PANTHER" id="PTHR31238">
    <property type="entry name" value="GERMIN-LIKE PROTEIN SUBFAMILY 3 MEMBER 3"/>
    <property type="match status" value="1"/>
</dbReference>
<dbReference type="Pfam" id="PF00190">
    <property type="entry name" value="Cupin_1"/>
    <property type="match status" value="1"/>
</dbReference>
<dbReference type="PRINTS" id="PR00325">
    <property type="entry name" value="GERMIN"/>
</dbReference>
<dbReference type="SMART" id="SM00835">
    <property type="entry name" value="Cupin_1"/>
    <property type="match status" value="1"/>
</dbReference>
<dbReference type="SUPFAM" id="SSF51182">
    <property type="entry name" value="RmlC-like cupins"/>
    <property type="match status" value="1"/>
</dbReference>
<dbReference type="PROSITE" id="PS00725">
    <property type="entry name" value="GERMIN"/>
    <property type="match status" value="1"/>
</dbReference>
<feature type="signal peptide" evidence="2">
    <location>
        <begin position="1"/>
        <end position="24"/>
    </location>
</feature>
<feature type="chain" id="PRO_0000010812" description="Putative germin-like protein subfamily 1 member 12">
    <location>
        <begin position="25"/>
        <end position="223"/>
    </location>
</feature>
<feature type="domain" description="Cupin type-1" evidence="2">
    <location>
        <begin position="65"/>
        <end position="216"/>
    </location>
</feature>
<feature type="binding site" evidence="1">
    <location>
        <position position="114"/>
    </location>
    <ligand>
        <name>Mn(2+)</name>
        <dbReference type="ChEBI" id="CHEBI:29035"/>
    </ligand>
</feature>
<feature type="binding site" evidence="1">
    <location>
        <position position="116"/>
    </location>
    <ligand>
        <name>Mn(2+)</name>
        <dbReference type="ChEBI" id="CHEBI:29035"/>
    </ligand>
</feature>
<feature type="binding site" evidence="1">
    <location>
        <position position="121"/>
    </location>
    <ligand>
        <name>Mn(2+)</name>
        <dbReference type="ChEBI" id="CHEBI:29035"/>
    </ligand>
</feature>
<feature type="binding site" evidence="1">
    <location>
        <position position="162"/>
    </location>
    <ligand>
        <name>Mn(2+)</name>
        <dbReference type="ChEBI" id="CHEBI:29035"/>
    </ligand>
</feature>
<feature type="glycosylation site" description="N-linked (GlcNAc...) asparagine" evidence="2">
    <location>
        <position position="81"/>
    </location>
</feature>
<feature type="glycosylation site" description="N-linked (GlcNAc...) asparagine" evidence="2">
    <location>
        <position position="145"/>
    </location>
</feature>
<feature type="disulfide bond" evidence="1">
    <location>
        <begin position="34"/>
        <end position="51"/>
    </location>
</feature>
<name>GL112_ARATH</name>